<comment type="function">
    <text evidence="1">Catalyzes the initial step of the lipid cycle reactions in the biosynthesis of the cell wall peptidoglycan: transfers peptidoglycan precursor phospho-MurNAc-pentapeptide from UDP-MurNAc-pentapeptide onto the lipid carrier undecaprenyl phosphate, yielding undecaprenyl-pyrophosphoryl-MurNAc-pentapeptide, known as lipid I.</text>
</comment>
<comment type="catalytic activity">
    <reaction evidence="1">
        <text>UDP-N-acetyl-alpha-D-muramoyl-L-alanyl-gamma-D-glutamyl-L-lysyl-D-alanyl-D-alanine + di-trans,octa-cis-undecaprenyl phosphate = Mur2Ac(oyl-L-Ala-gamma-D-Glu-L-Lys-D-Ala-D-Ala)-di-trans,octa-cis-undecaprenyl diphosphate + UMP</text>
        <dbReference type="Rhea" id="RHEA:21920"/>
        <dbReference type="ChEBI" id="CHEBI:57865"/>
        <dbReference type="ChEBI" id="CHEBI:60032"/>
        <dbReference type="ChEBI" id="CHEBI:60392"/>
        <dbReference type="ChEBI" id="CHEBI:70758"/>
        <dbReference type="EC" id="2.7.8.13"/>
    </reaction>
</comment>
<comment type="cofactor">
    <cofactor evidence="1">
        <name>Mg(2+)</name>
        <dbReference type="ChEBI" id="CHEBI:18420"/>
    </cofactor>
</comment>
<comment type="pathway">
    <text evidence="1">Cell wall biogenesis; peptidoglycan biosynthesis.</text>
</comment>
<comment type="subcellular location">
    <subcellularLocation>
        <location evidence="1">Cell membrane</location>
        <topology evidence="1">Multi-pass membrane protein</topology>
    </subcellularLocation>
</comment>
<comment type="similarity">
    <text evidence="1 2">Belongs to the glycosyltransferase 4 family. MraY subfamily.</text>
</comment>
<organism>
    <name type="scientific">Staphylococcus aureus (strain MW2)</name>
    <dbReference type="NCBI Taxonomy" id="196620"/>
    <lineage>
        <taxon>Bacteria</taxon>
        <taxon>Bacillati</taxon>
        <taxon>Bacillota</taxon>
        <taxon>Bacilli</taxon>
        <taxon>Bacillales</taxon>
        <taxon>Staphylococcaceae</taxon>
        <taxon>Staphylococcus</taxon>
    </lineage>
</organism>
<gene>
    <name evidence="1" type="primary">mraY</name>
    <name type="ordered locus">MW1065</name>
</gene>
<dbReference type="EC" id="2.7.8.13" evidence="1"/>
<dbReference type="EMBL" id="BA000033">
    <property type="protein sequence ID" value="BAB94930.1"/>
    <property type="molecule type" value="Genomic_DNA"/>
</dbReference>
<dbReference type="RefSeq" id="WP_000578469.1">
    <property type="nucleotide sequence ID" value="NC_003923.1"/>
</dbReference>
<dbReference type="SMR" id="Q8NX36"/>
<dbReference type="KEGG" id="sam:MW1065"/>
<dbReference type="HOGENOM" id="CLU_023982_0_1_9"/>
<dbReference type="UniPathway" id="UPA00219"/>
<dbReference type="GO" id="GO:0005886">
    <property type="term" value="C:plasma membrane"/>
    <property type="evidence" value="ECO:0007669"/>
    <property type="project" value="UniProtKB-SubCell"/>
</dbReference>
<dbReference type="GO" id="GO:0046872">
    <property type="term" value="F:metal ion binding"/>
    <property type="evidence" value="ECO:0007669"/>
    <property type="project" value="UniProtKB-KW"/>
</dbReference>
<dbReference type="GO" id="GO:0008963">
    <property type="term" value="F:phospho-N-acetylmuramoyl-pentapeptide-transferase activity"/>
    <property type="evidence" value="ECO:0007669"/>
    <property type="project" value="UniProtKB-UniRule"/>
</dbReference>
<dbReference type="GO" id="GO:0051301">
    <property type="term" value="P:cell division"/>
    <property type="evidence" value="ECO:0007669"/>
    <property type="project" value="UniProtKB-KW"/>
</dbReference>
<dbReference type="GO" id="GO:0071555">
    <property type="term" value="P:cell wall organization"/>
    <property type="evidence" value="ECO:0007669"/>
    <property type="project" value="UniProtKB-KW"/>
</dbReference>
<dbReference type="GO" id="GO:0009252">
    <property type="term" value="P:peptidoglycan biosynthetic process"/>
    <property type="evidence" value="ECO:0007669"/>
    <property type="project" value="UniProtKB-UniRule"/>
</dbReference>
<dbReference type="GO" id="GO:0008360">
    <property type="term" value="P:regulation of cell shape"/>
    <property type="evidence" value="ECO:0007669"/>
    <property type="project" value="UniProtKB-KW"/>
</dbReference>
<dbReference type="CDD" id="cd06852">
    <property type="entry name" value="GT_MraY"/>
    <property type="match status" value="1"/>
</dbReference>
<dbReference type="HAMAP" id="MF_00038">
    <property type="entry name" value="MraY"/>
    <property type="match status" value="1"/>
</dbReference>
<dbReference type="InterPro" id="IPR000715">
    <property type="entry name" value="Glycosyl_transferase_4"/>
</dbReference>
<dbReference type="InterPro" id="IPR003524">
    <property type="entry name" value="PNAcMuramoyl-5peptid_Trfase"/>
</dbReference>
<dbReference type="InterPro" id="IPR018480">
    <property type="entry name" value="PNAcMuramoyl-5peptid_Trfase_CS"/>
</dbReference>
<dbReference type="NCBIfam" id="TIGR00445">
    <property type="entry name" value="mraY"/>
    <property type="match status" value="1"/>
</dbReference>
<dbReference type="PANTHER" id="PTHR22926">
    <property type="entry name" value="PHOSPHO-N-ACETYLMURAMOYL-PENTAPEPTIDE-TRANSFERASE"/>
    <property type="match status" value="1"/>
</dbReference>
<dbReference type="PANTHER" id="PTHR22926:SF5">
    <property type="entry name" value="PHOSPHO-N-ACETYLMURAMOYL-PENTAPEPTIDE-TRANSFERASE HOMOLOG"/>
    <property type="match status" value="1"/>
</dbReference>
<dbReference type="Pfam" id="PF00953">
    <property type="entry name" value="Glycos_transf_4"/>
    <property type="match status" value="1"/>
</dbReference>
<dbReference type="PROSITE" id="PS01347">
    <property type="entry name" value="MRAY_1"/>
    <property type="match status" value="1"/>
</dbReference>
<dbReference type="PROSITE" id="PS01348">
    <property type="entry name" value="MRAY_2"/>
    <property type="match status" value="1"/>
</dbReference>
<feature type="chain" id="PRO_0000108896" description="Phospho-N-acetylmuramoyl-pentapeptide-transferase">
    <location>
        <begin position="1"/>
        <end position="321"/>
    </location>
</feature>
<feature type="transmembrane region" description="Helical" evidence="1">
    <location>
        <begin position="1"/>
        <end position="21"/>
    </location>
</feature>
<feature type="transmembrane region" description="Helical" evidence="1">
    <location>
        <begin position="50"/>
        <end position="70"/>
    </location>
</feature>
<feature type="transmembrane region" description="Helical" evidence="1">
    <location>
        <begin position="76"/>
        <end position="96"/>
    </location>
</feature>
<feature type="transmembrane region" description="Helical" evidence="1">
    <location>
        <begin position="112"/>
        <end position="132"/>
    </location>
</feature>
<feature type="transmembrane region" description="Helical" evidence="1">
    <location>
        <begin position="140"/>
        <end position="160"/>
    </location>
</feature>
<feature type="transmembrane region" description="Helical" evidence="1">
    <location>
        <begin position="176"/>
        <end position="196"/>
    </location>
</feature>
<feature type="transmembrane region" description="Helical" evidence="1">
    <location>
        <begin position="200"/>
        <end position="220"/>
    </location>
</feature>
<feature type="transmembrane region" description="Helical" evidence="1">
    <location>
        <begin position="225"/>
        <end position="245"/>
    </location>
</feature>
<feature type="transmembrane region" description="Helical" evidence="1">
    <location>
        <begin position="250"/>
        <end position="270"/>
    </location>
</feature>
<feature type="transmembrane region" description="Helical" evidence="1">
    <location>
        <begin position="300"/>
        <end position="320"/>
    </location>
</feature>
<protein>
    <recommendedName>
        <fullName evidence="1">Phospho-N-acetylmuramoyl-pentapeptide-transferase</fullName>
        <ecNumber evidence="1">2.7.8.13</ecNumber>
    </recommendedName>
    <alternativeName>
        <fullName evidence="1">UDP-MurNAc-pentapeptide phosphotransferase</fullName>
    </alternativeName>
</protein>
<sequence length="321" mass="35261">MIFVYALLALVITFVLVPVLIPTLKRMKFGQSIREEGPQSHMKKTGTPTMGGLTFLLSIVITSLVVIIFVDQANPIILLLFVTIGFGLIGFIDDYIIVVKKNNQGLTSKQKFLAQIGIAIIFFVLSNVFHLVNFSTSIHIPFTNVAIPLSFAYVIFIVFWQVGFSNAVNLTDGLDGLATGLSIIGFTMYAIMSFVLGETAIGIFCIIMLFALLGFLPYNINPAKVFMGDTGSLALGGIFATISIMLNQELSLIFIGLVFVIETLSVMLQVASFKLTGKRIFKMSPIHHHFELIGWSEWKVVTVFWAVGLISGLIGLWIGVH</sequence>
<reference key="1">
    <citation type="journal article" date="2002" name="Lancet">
        <title>Genome and virulence determinants of high virulence community-acquired MRSA.</title>
        <authorList>
            <person name="Baba T."/>
            <person name="Takeuchi F."/>
            <person name="Kuroda M."/>
            <person name="Yuzawa H."/>
            <person name="Aoki K."/>
            <person name="Oguchi A."/>
            <person name="Nagai Y."/>
            <person name="Iwama N."/>
            <person name="Asano K."/>
            <person name="Naimi T."/>
            <person name="Kuroda H."/>
            <person name="Cui L."/>
            <person name="Yamamoto K."/>
            <person name="Hiramatsu K."/>
        </authorList>
    </citation>
    <scope>NUCLEOTIDE SEQUENCE [LARGE SCALE GENOMIC DNA]</scope>
    <source>
        <strain>MW2</strain>
    </source>
</reference>
<proteinExistence type="inferred from homology"/>
<accession>Q8NX36</accession>
<keyword id="KW-0131">Cell cycle</keyword>
<keyword id="KW-0132">Cell division</keyword>
<keyword id="KW-1003">Cell membrane</keyword>
<keyword id="KW-0133">Cell shape</keyword>
<keyword id="KW-0961">Cell wall biogenesis/degradation</keyword>
<keyword id="KW-0460">Magnesium</keyword>
<keyword id="KW-0472">Membrane</keyword>
<keyword id="KW-0479">Metal-binding</keyword>
<keyword id="KW-0573">Peptidoglycan synthesis</keyword>
<keyword id="KW-0808">Transferase</keyword>
<keyword id="KW-0812">Transmembrane</keyword>
<keyword id="KW-1133">Transmembrane helix</keyword>
<evidence type="ECO:0000255" key="1">
    <source>
        <dbReference type="HAMAP-Rule" id="MF_00038"/>
    </source>
</evidence>
<evidence type="ECO:0000305" key="2"/>
<name>MRAY_STAAW</name>